<comment type="function">
    <text evidence="1">DNA-binding protein that preferentially recognizes a curved DNA sequence. It is probably a functional analog of DnaJ; displays overlapping activities with DnaJ, but functions under different conditions, probably acting as a molecular chaperone in an adaptive response to environmental stresses other than heat shock. Lacks autonomous chaperone activity; binds native substrates and targets them for recognition by DnaK. Its activity is inhibited by the binding of CbpM.</text>
</comment>
<comment type="subcellular location">
    <subcellularLocation>
        <location evidence="1">Cytoplasm</location>
        <location evidence="1">Nucleoid</location>
    </subcellularLocation>
</comment>
<evidence type="ECO:0000255" key="1">
    <source>
        <dbReference type="HAMAP-Rule" id="MF_01154"/>
    </source>
</evidence>
<name>CBPA_SALCH</name>
<sequence length="306" mass="34692">MELKDYYAIMGVKPTDDLKTIKTAYRRLARKYHPDVSKEPNAEARFKEVAEAWEVLSDEQRRAEYDQLWQHRNDPQFNRQFQQHEGQPYNAEDFDDIFSSIFGQHGRHSHHRHAARGHDIEIEVAVFLEETLEEHQRTISYSVPVYNAFGLVEREIPKTLNVKIPAGVSNGQRIRLKGQGTPGENGGPNGDLWLVIHIAPHPLFDIVNQDLEVVLPLAPWEAALGAKVSVPTLKERILLTIPPGSQAGQRLRIKGKGLASKKHTGDLYAIIKIVMPPKPDEKTAALWQQLADAQSSFDPRQQWGKA</sequence>
<reference key="1">
    <citation type="journal article" date="2005" name="Nucleic Acids Res.">
        <title>The genome sequence of Salmonella enterica serovar Choleraesuis, a highly invasive and resistant zoonotic pathogen.</title>
        <authorList>
            <person name="Chiu C.-H."/>
            <person name="Tang P."/>
            <person name="Chu C."/>
            <person name="Hu S."/>
            <person name="Bao Q."/>
            <person name="Yu J."/>
            <person name="Chou Y.-Y."/>
            <person name="Wang H.-S."/>
            <person name="Lee Y.-S."/>
        </authorList>
    </citation>
    <scope>NUCLEOTIDE SEQUENCE [LARGE SCALE GENOMIC DNA]</scope>
    <source>
        <strain>SC-B67</strain>
    </source>
</reference>
<gene>
    <name evidence="1" type="primary">cbpA</name>
    <name type="ordered locus">SCH_1063</name>
</gene>
<proteinExistence type="inferred from homology"/>
<dbReference type="EMBL" id="AE017220">
    <property type="protein sequence ID" value="AAX64969.1"/>
    <property type="molecule type" value="Genomic_DNA"/>
</dbReference>
<dbReference type="RefSeq" id="WP_001539671.1">
    <property type="nucleotide sequence ID" value="NC_006905.1"/>
</dbReference>
<dbReference type="SMR" id="Q57QP2"/>
<dbReference type="KEGG" id="sec:SCH_1063"/>
<dbReference type="HOGENOM" id="CLU_017633_0_0_6"/>
<dbReference type="Proteomes" id="UP000000538">
    <property type="component" value="Chromosome"/>
</dbReference>
<dbReference type="GO" id="GO:0005737">
    <property type="term" value="C:cytoplasm"/>
    <property type="evidence" value="ECO:0007669"/>
    <property type="project" value="UniProtKB-UniRule"/>
</dbReference>
<dbReference type="GO" id="GO:0009295">
    <property type="term" value="C:nucleoid"/>
    <property type="evidence" value="ECO:0007669"/>
    <property type="project" value="UniProtKB-SubCell"/>
</dbReference>
<dbReference type="GO" id="GO:0003681">
    <property type="term" value="F:bent DNA binding"/>
    <property type="evidence" value="ECO:0007669"/>
    <property type="project" value="UniProtKB-UniRule"/>
</dbReference>
<dbReference type="GO" id="GO:0051082">
    <property type="term" value="F:unfolded protein binding"/>
    <property type="evidence" value="ECO:0007669"/>
    <property type="project" value="InterPro"/>
</dbReference>
<dbReference type="GO" id="GO:0051085">
    <property type="term" value="P:chaperone cofactor-dependent protein refolding"/>
    <property type="evidence" value="ECO:0007669"/>
    <property type="project" value="TreeGrafter"/>
</dbReference>
<dbReference type="GO" id="GO:0042026">
    <property type="term" value="P:protein refolding"/>
    <property type="evidence" value="ECO:0007669"/>
    <property type="project" value="TreeGrafter"/>
</dbReference>
<dbReference type="CDD" id="cd06257">
    <property type="entry name" value="DnaJ"/>
    <property type="match status" value="1"/>
</dbReference>
<dbReference type="CDD" id="cd10747">
    <property type="entry name" value="DnaJ_C"/>
    <property type="match status" value="1"/>
</dbReference>
<dbReference type="FunFam" id="1.10.287.110:FF:000013">
    <property type="entry name" value="Curved DNA-binding protein"/>
    <property type="match status" value="1"/>
</dbReference>
<dbReference type="FunFam" id="2.60.260.20:FF:000008">
    <property type="entry name" value="Curved DNA-binding protein"/>
    <property type="match status" value="1"/>
</dbReference>
<dbReference type="Gene3D" id="1.10.287.110">
    <property type="entry name" value="DnaJ domain"/>
    <property type="match status" value="1"/>
</dbReference>
<dbReference type="Gene3D" id="1.20.5.460">
    <property type="entry name" value="Single helix bin"/>
    <property type="match status" value="1"/>
</dbReference>
<dbReference type="Gene3D" id="2.60.260.20">
    <property type="entry name" value="Urease metallochaperone UreE, N-terminal domain"/>
    <property type="match status" value="2"/>
</dbReference>
<dbReference type="HAMAP" id="MF_01154">
    <property type="entry name" value="CbpA"/>
    <property type="match status" value="1"/>
</dbReference>
<dbReference type="InterPro" id="IPR023859">
    <property type="entry name" value="DNA-bd_curved-DNA"/>
</dbReference>
<dbReference type="InterPro" id="IPR002939">
    <property type="entry name" value="DnaJ_C"/>
</dbReference>
<dbReference type="InterPro" id="IPR001623">
    <property type="entry name" value="DnaJ_domain"/>
</dbReference>
<dbReference type="InterPro" id="IPR018253">
    <property type="entry name" value="DnaJ_domain_CS"/>
</dbReference>
<dbReference type="InterPro" id="IPR008971">
    <property type="entry name" value="HSP40/DnaJ_pept-bd"/>
</dbReference>
<dbReference type="InterPro" id="IPR036869">
    <property type="entry name" value="J_dom_sf"/>
</dbReference>
<dbReference type="NCBIfam" id="NF007618">
    <property type="entry name" value="PRK10266.1"/>
    <property type="match status" value="1"/>
</dbReference>
<dbReference type="PANTHER" id="PTHR43096">
    <property type="entry name" value="DNAJ HOMOLOG 1, MITOCHONDRIAL-RELATED"/>
    <property type="match status" value="1"/>
</dbReference>
<dbReference type="PANTHER" id="PTHR43096:SF52">
    <property type="entry name" value="DNAJ HOMOLOG 1, MITOCHONDRIAL-RELATED"/>
    <property type="match status" value="1"/>
</dbReference>
<dbReference type="Pfam" id="PF00226">
    <property type="entry name" value="DnaJ"/>
    <property type="match status" value="1"/>
</dbReference>
<dbReference type="Pfam" id="PF01556">
    <property type="entry name" value="DnaJ_C"/>
    <property type="match status" value="1"/>
</dbReference>
<dbReference type="PRINTS" id="PR00625">
    <property type="entry name" value="JDOMAIN"/>
</dbReference>
<dbReference type="SMART" id="SM00271">
    <property type="entry name" value="DnaJ"/>
    <property type="match status" value="1"/>
</dbReference>
<dbReference type="SUPFAM" id="SSF46565">
    <property type="entry name" value="Chaperone J-domain"/>
    <property type="match status" value="1"/>
</dbReference>
<dbReference type="SUPFAM" id="SSF49493">
    <property type="entry name" value="HSP40/DnaJ peptide-binding domain"/>
    <property type="match status" value="2"/>
</dbReference>
<dbReference type="PROSITE" id="PS00636">
    <property type="entry name" value="DNAJ_1"/>
    <property type="match status" value="1"/>
</dbReference>
<dbReference type="PROSITE" id="PS50076">
    <property type="entry name" value="DNAJ_2"/>
    <property type="match status" value="1"/>
</dbReference>
<protein>
    <recommendedName>
        <fullName evidence="1">Curved DNA-binding protein</fullName>
    </recommendedName>
</protein>
<accession>Q57QP2</accession>
<feature type="chain" id="PRO_0000286883" description="Curved DNA-binding protein">
    <location>
        <begin position="1"/>
        <end position="306"/>
    </location>
</feature>
<feature type="domain" description="J" evidence="1">
    <location>
        <begin position="5"/>
        <end position="69"/>
    </location>
</feature>
<keyword id="KW-0143">Chaperone</keyword>
<keyword id="KW-0963">Cytoplasm</keyword>
<keyword id="KW-0238">DNA-binding</keyword>
<organism>
    <name type="scientific">Salmonella choleraesuis (strain SC-B67)</name>
    <dbReference type="NCBI Taxonomy" id="321314"/>
    <lineage>
        <taxon>Bacteria</taxon>
        <taxon>Pseudomonadati</taxon>
        <taxon>Pseudomonadota</taxon>
        <taxon>Gammaproteobacteria</taxon>
        <taxon>Enterobacterales</taxon>
        <taxon>Enterobacteriaceae</taxon>
        <taxon>Salmonella</taxon>
    </lineage>
</organism>